<sequence length="850" mass="96907">MYLYIETLKQRLDAINQLRVDRALAAMGPAFQKVYSLLPILLHCHHPQMPGYLDGNVPHGVCLFTPNEIQQDYLADVEARWGEPLAPSAGGELPITGVYSMGSTSSIGQCHTSDLDIWVCHQAWLDTEERNQLQQKCSLLEKWAASMGVEVSFFLVDENRFRHNASGSLGGEDCGSTQHILLLDEFYRSAVRLAGKRILWNMVPVKEEEHYDDYVLSLYAQGVLTPNEWLDLGGLSTLSAEEYFGASLWQLYKSIDSPYKAVLKTLLLEAYSWEYPNSQLLAMEIKQHLHAGEIVSFGLDAYCMMLDRVTRYLIQINDTTRLNLVRRCFYLKVCEKLSRTPASTGWRREVLSQLVSEWGWSNEKLAVLDNRANWKIERVREAHNELLDAMMQSYRNLIRFARRNNLSVSASPQDIGVLTRKLYAAFEALPGKVTLVNPQISPDLSEEHLTFIHVPAGRANRPGWYLYNQAPSMDAIVSHQPLEYNRYLNKLVSWAYFNGLLTSKTHLHIKSANLCDTVKLQELVTDISHHFPLRLAAPTPKALYSPCEIRHLAIIVNLEHDPTTTFRNQVVHFDFRKLDVFSFGEQQQCLVGSIDLLYRNSWNEVRTLHFSGEQAVLEALKTILGKMHQDAAPPESVDVFCYSQHLRGLIRTRIQQLVSECIDLRLSSTRQEPGRFKAVRVSGQTWGLFFERLSVSVQKLENAVEFYGAISNNKLHGLSVQVETNQIHLPPVVDGFASEGIIQFFFEGTADEKGFNIYILDEANRVEVYHHCEGSKEELVRDVSRFYSSSHDRFTYGSSFINFNLPQFYQIVQLDGRTQVIPFRSNTLSQLCANIAEKEASLPTKQCQLH</sequence>
<comment type="catalytic activity">
    <reaction>
        <text>ATP = 3',5'-cyclic AMP + diphosphate</text>
        <dbReference type="Rhea" id="RHEA:15389"/>
        <dbReference type="ChEBI" id="CHEBI:30616"/>
        <dbReference type="ChEBI" id="CHEBI:33019"/>
        <dbReference type="ChEBI" id="CHEBI:58165"/>
        <dbReference type="EC" id="4.6.1.1"/>
    </reaction>
</comment>
<comment type="activity regulation">
    <text>The regulatory domain is involved in the regulation of cyclase activity by the carbon source.</text>
</comment>
<comment type="subcellular location">
    <subcellularLocation>
        <location>Cytoplasm</location>
    </subcellularLocation>
</comment>
<comment type="similarity">
    <text evidence="2">Belongs to the adenylyl cyclase class-1 family.</text>
</comment>
<keyword id="KW-0067">ATP-binding</keyword>
<keyword id="KW-0115">cAMP biosynthesis</keyword>
<keyword id="KW-0963">Cytoplasm</keyword>
<keyword id="KW-0456">Lyase</keyword>
<keyword id="KW-0547">Nucleotide-binding</keyword>
<keyword id="KW-1185">Reference proteome</keyword>
<dbReference type="EC" id="4.6.1.1"/>
<dbReference type="EMBL" id="U22968">
    <property type="protein sequence ID" value="AAC44324.1"/>
    <property type="molecule type" value="Genomic_DNA"/>
</dbReference>
<dbReference type="EMBL" id="AL590842">
    <property type="protein sequence ID" value="CAL22435.1"/>
    <property type="molecule type" value="Genomic_DNA"/>
</dbReference>
<dbReference type="EMBL" id="AE009952">
    <property type="protein sequence ID" value="AAM83971.1"/>
    <property type="molecule type" value="Genomic_DNA"/>
</dbReference>
<dbReference type="EMBL" id="AE017042">
    <property type="protein sequence ID" value="AAS63367.1"/>
    <property type="molecule type" value="Genomic_DNA"/>
</dbReference>
<dbReference type="PIR" id="AH0468">
    <property type="entry name" value="AH0468"/>
</dbReference>
<dbReference type="RefSeq" id="WP_002211468.1">
    <property type="nucleotide sequence ID" value="NZ_WUCM01000033.1"/>
</dbReference>
<dbReference type="RefSeq" id="YP_002348726.1">
    <property type="nucleotide sequence ID" value="NC_003143.1"/>
</dbReference>
<dbReference type="IntAct" id="P40127">
    <property type="interactions" value="9"/>
</dbReference>
<dbReference type="STRING" id="214092.YPO3848"/>
<dbReference type="PaxDb" id="214092-YPO3848"/>
<dbReference type="EnsemblBacteria" id="AAS63367">
    <property type="protein sequence ID" value="AAS63367"/>
    <property type="gene ID" value="YP_3199"/>
</dbReference>
<dbReference type="KEGG" id="ype:YPO3848"/>
<dbReference type="KEGG" id="ypk:y0382"/>
<dbReference type="KEGG" id="ypm:YP_3199"/>
<dbReference type="PATRIC" id="fig|214092.21.peg.4372"/>
<dbReference type="eggNOG" id="COG3072">
    <property type="taxonomic scope" value="Bacteria"/>
</dbReference>
<dbReference type="HOGENOM" id="CLU_013280_0_0_6"/>
<dbReference type="OMA" id="YDDYVMS"/>
<dbReference type="OrthoDB" id="5571448at2"/>
<dbReference type="Proteomes" id="UP000000815">
    <property type="component" value="Chromosome"/>
</dbReference>
<dbReference type="Proteomes" id="UP000001019">
    <property type="component" value="Chromosome"/>
</dbReference>
<dbReference type="Proteomes" id="UP000002490">
    <property type="component" value="Chromosome"/>
</dbReference>
<dbReference type="GO" id="GO:0005737">
    <property type="term" value="C:cytoplasm"/>
    <property type="evidence" value="ECO:0007669"/>
    <property type="project" value="UniProtKB-SubCell"/>
</dbReference>
<dbReference type="GO" id="GO:0004016">
    <property type="term" value="F:adenylate cyclase activity"/>
    <property type="evidence" value="ECO:0000318"/>
    <property type="project" value="GO_Central"/>
</dbReference>
<dbReference type="GO" id="GO:0005524">
    <property type="term" value="F:ATP binding"/>
    <property type="evidence" value="ECO:0007669"/>
    <property type="project" value="UniProtKB-KW"/>
</dbReference>
<dbReference type="GO" id="GO:0006171">
    <property type="term" value="P:cAMP biosynthetic process"/>
    <property type="evidence" value="ECO:0007669"/>
    <property type="project" value="UniProtKB-KW"/>
</dbReference>
<dbReference type="InterPro" id="IPR000274">
    <property type="entry name" value="Adenylate_cyclase_1"/>
</dbReference>
<dbReference type="InterPro" id="IPR024686">
    <property type="entry name" value="Adenylate_cyclase_1_CS"/>
</dbReference>
<dbReference type="InterPro" id="IPR024685">
    <property type="entry name" value="Adenylate_cyclase_1_N"/>
</dbReference>
<dbReference type="NCBIfam" id="NF006978">
    <property type="entry name" value="PRK09450.1-2"/>
    <property type="match status" value="1"/>
</dbReference>
<dbReference type="NCBIfam" id="NF006979">
    <property type="entry name" value="PRK09450.1-4"/>
    <property type="match status" value="1"/>
</dbReference>
<dbReference type="PANTHER" id="PTHR38760">
    <property type="entry name" value="ADENYLATE CYCLASE"/>
    <property type="match status" value="1"/>
</dbReference>
<dbReference type="PANTHER" id="PTHR38760:SF1">
    <property type="entry name" value="ADENYLATE CYCLASE"/>
    <property type="match status" value="1"/>
</dbReference>
<dbReference type="Pfam" id="PF12633">
    <property type="entry name" value="Adenyl_cycl_N"/>
    <property type="match status" value="1"/>
</dbReference>
<dbReference type="Pfam" id="PF01295">
    <property type="entry name" value="Adenylate_cycl"/>
    <property type="match status" value="1"/>
</dbReference>
<dbReference type="PIRSF" id="PIRSF001444">
    <property type="entry name" value="Adenylate_cycl"/>
    <property type="match status" value="1"/>
</dbReference>
<dbReference type="PROSITE" id="PS01092">
    <property type="entry name" value="ADENYLATE_CYCLASE_1_1"/>
    <property type="match status" value="1"/>
</dbReference>
<dbReference type="PROSITE" id="PS01093">
    <property type="entry name" value="ADENYLATE_CYCLASE_1_2"/>
    <property type="match status" value="1"/>
</dbReference>
<evidence type="ECO:0000255" key="1"/>
<evidence type="ECO:0000305" key="2"/>
<organism>
    <name type="scientific">Yersinia pestis</name>
    <dbReference type="NCBI Taxonomy" id="632"/>
    <lineage>
        <taxon>Bacteria</taxon>
        <taxon>Pseudomonadati</taxon>
        <taxon>Pseudomonadota</taxon>
        <taxon>Gammaproteobacteria</taxon>
        <taxon>Enterobacterales</taxon>
        <taxon>Yersiniaceae</taxon>
        <taxon>Yersinia</taxon>
    </lineage>
</organism>
<protein>
    <recommendedName>
        <fullName>Adenylate cyclase</fullName>
        <ecNumber>4.6.1.1</ecNumber>
    </recommendedName>
    <alternativeName>
        <fullName>ATP pyrophosphate-lyase</fullName>
    </alternativeName>
    <alternativeName>
        <fullName>Adenylyl cyclase</fullName>
    </alternativeName>
</protein>
<feature type="chain" id="PRO_0000195680" description="Adenylate cyclase">
    <location>
        <begin position="1"/>
        <end position="850"/>
    </location>
</feature>
<feature type="region of interest" description="Catalytic" evidence="1">
    <location>
        <begin position="1"/>
        <end position="535"/>
    </location>
</feature>
<feature type="region of interest" description="Regulatory" evidence="1">
    <location>
        <begin position="541"/>
        <end position="850"/>
    </location>
</feature>
<feature type="sequence conflict" description="In Ref. 1; AAC44324." evidence="2" ref="1">
    <original>AQ</original>
    <variation>RE</variation>
    <location>
        <begin position="220"/>
        <end position="221"/>
    </location>
</feature>
<feature type="sequence conflict" description="In Ref. 1; AAC44324." evidence="2" ref="1">
    <original>N</original>
    <variation>K</variation>
    <location>
        <position position="277"/>
    </location>
</feature>
<feature type="sequence conflict" description="In Ref. 4; AAS63367." evidence="2" ref="4">
    <original>C</original>
    <variation>R</variation>
    <location>
        <position position="334"/>
    </location>
</feature>
<feature type="sequence conflict" description="In Ref. 1; AAC44324." evidence="2" ref="1">
    <original>R</original>
    <variation>C</variation>
    <location>
        <position position="550"/>
    </location>
</feature>
<feature type="sequence conflict" description="In Ref. 1; AAC44324." evidence="2" ref="1">
    <original>H</original>
    <variation>D</variation>
    <location>
        <position position="572"/>
    </location>
</feature>
<reference key="1">
    <citation type="journal article" date="1996" name="Biochimie">
        <title>Comparative analysis of the cya locus in enterobacteria and related Gram-negative facultative anaerobes.</title>
        <authorList>
            <person name="Trotot P."/>
            <person name="Sismeiro O."/>
            <person name="Vivares C."/>
            <person name="Glaser P."/>
            <person name="Bresson-Roy A."/>
            <person name="Danchin A."/>
        </authorList>
    </citation>
    <scope>NUCLEOTIDE SEQUENCE [GENOMIC DNA]</scope>
    <source>
        <strain>EV 40</strain>
    </source>
</reference>
<reference key="2">
    <citation type="journal article" date="2001" name="Nature">
        <title>Genome sequence of Yersinia pestis, the causative agent of plague.</title>
        <authorList>
            <person name="Parkhill J."/>
            <person name="Wren B.W."/>
            <person name="Thomson N.R."/>
            <person name="Titball R.W."/>
            <person name="Holden M.T.G."/>
            <person name="Prentice M.B."/>
            <person name="Sebaihia M."/>
            <person name="James K.D."/>
            <person name="Churcher C.M."/>
            <person name="Mungall K.L."/>
            <person name="Baker S."/>
            <person name="Basham D."/>
            <person name="Bentley S.D."/>
            <person name="Brooks K."/>
            <person name="Cerdeno-Tarraga A.-M."/>
            <person name="Chillingworth T."/>
            <person name="Cronin A."/>
            <person name="Davies R.M."/>
            <person name="Davis P."/>
            <person name="Dougan G."/>
            <person name="Feltwell T."/>
            <person name="Hamlin N."/>
            <person name="Holroyd S."/>
            <person name="Jagels K."/>
            <person name="Karlyshev A.V."/>
            <person name="Leather S."/>
            <person name="Moule S."/>
            <person name="Oyston P.C.F."/>
            <person name="Quail M.A."/>
            <person name="Rutherford K.M."/>
            <person name="Simmonds M."/>
            <person name="Skelton J."/>
            <person name="Stevens K."/>
            <person name="Whitehead S."/>
            <person name="Barrell B.G."/>
        </authorList>
    </citation>
    <scope>NUCLEOTIDE SEQUENCE [LARGE SCALE GENOMIC DNA]</scope>
    <source>
        <strain>CO-92 / Biovar Orientalis</strain>
    </source>
</reference>
<reference key="3">
    <citation type="journal article" date="2002" name="J. Bacteriol.">
        <title>Genome sequence of Yersinia pestis KIM.</title>
        <authorList>
            <person name="Deng W."/>
            <person name="Burland V."/>
            <person name="Plunkett G. III"/>
            <person name="Boutin A."/>
            <person name="Mayhew G.F."/>
            <person name="Liss P."/>
            <person name="Perna N.T."/>
            <person name="Rose D.J."/>
            <person name="Mau B."/>
            <person name="Zhou S."/>
            <person name="Schwartz D.C."/>
            <person name="Fetherston J.D."/>
            <person name="Lindler L.E."/>
            <person name="Brubaker R.R."/>
            <person name="Plano G.V."/>
            <person name="Straley S.C."/>
            <person name="McDonough K.A."/>
            <person name="Nilles M.L."/>
            <person name="Matson J.S."/>
            <person name="Blattner F.R."/>
            <person name="Perry R.D."/>
        </authorList>
    </citation>
    <scope>NUCLEOTIDE SEQUENCE [LARGE SCALE GENOMIC DNA]</scope>
    <source>
        <strain>KIM10+ / Biovar Mediaevalis</strain>
    </source>
</reference>
<reference key="4">
    <citation type="journal article" date="2004" name="DNA Res.">
        <title>Complete genome sequence of Yersinia pestis strain 91001, an isolate avirulent to humans.</title>
        <authorList>
            <person name="Song Y."/>
            <person name="Tong Z."/>
            <person name="Wang J."/>
            <person name="Wang L."/>
            <person name="Guo Z."/>
            <person name="Han Y."/>
            <person name="Zhang J."/>
            <person name="Pei D."/>
            <person name="Zhou D."/>
            <person name="Qin H."/>
            <person name="Pang X."/>
            <person name="Han Y."/>
            <person name="Zhai J."/>
            <person name="Li M."/>
            <person name="Cui B."/>
            <person name="Qi Z."/>
            <person name="Jin L."/>
            <person name="Dai R."/>
            <person name="Chen F."/>
            <person name="Li S."/>
            <person name="Ye C."/>
            <person name="Du Z."/>
            <person name="Lin W."/>
            <person name="Wang J."/>
            <person name="Yu J."/>
            <person name="Yang H."/>
            <person name="Wang J."/>
            <person name="Huang P."/>
            <person name="Yang R."/>
        </authorList>
    </citation>
    <scope>NUCLEOTIDE SEQUENCE [LARGE SCALE GENOMIC DNA]</scope>
    <source>
        <strain>91001 / Biovar Mediaevalis</strain>
    </source>
</reference>
<reference key="5">
    <citation type="journal article" date="1993" name="Adv. Second Messenger Phosphoprotein Res.">
        <title>Phylogeny of adenylyl cyclases.</title>
        <authorList>
            <person name="Danchin A."/>
        </authorList>
    </citation>
    <scope>REVIEW</scope>
</reference>
<gene>
    <name type="primary">cya</name>
    <name type="synonym">cyaA</name>
    <name type="ordered locus">YPO3848</name>
    <name type="ordered locus">y0382</name>
    <name type="ordered locus">YP_3199</name>
</gene>
<proteinExistence type="inferred from homology"/>
<accession>P40127</accession>
<accession>Q0WAG2</accession>
<name>CYAA_YERPE</name>